<protein>
    <recommendedName>
        <fullName evidence="1">Putative antitoxin VapB16</fullName>
    </recommendedName>
</protein>
<gene>
    <name type="primary">vapB16</name>
    <name type="ordered locus">AF_1689</name>
</gene>
<organism>
    <name type="scientific">Archaeoglobus fulgidus (strain ATCC 49558 / DSM 4304 / JCM 9628 / NBRC 100126 / VC-16)</name>
    <dbReference type="NCBI Taxonomy" id="224325"/>
    <lineage>
        <taxon>Archaea</taxon>
        <taxon>Methanobacteriati</taxon>
        <taxon>Methanobacteriota</taxon>
        <taxon>Archaeoglobi</taxon>
        <taxon>Archaeoglobales</taxon>
        <taxon>Archaeoglobaceae</taxon>
        <taxon>Archaeoglobus</taxon>
    </lineage>
</organism>
<evidence type="ECO:0000255" key="1">
    <source>
        <dbReference type="HAMAP-Rule" id="MF_00794"/>
    </source>
</evidence>
<keyword id="KW-1185">Reference proteome</keyword>
<keyword id="KW-1277">Toxin-antitoxin system</keyword>
<proteinExistence type="inferred from homology"/>
<reference key="1">
    <citation type="journal article" date="1997" name="Nature">
        <title>The complete genome sequence of the hyperthermophilic, sulphate-reducing archaeon Archaeoglobus fulgidus.</title>
        <authorList>
            <person name="Klenk H.-P."/>
            <person name="Clayton R.A."/>
            <person name="Tomb J.-F."/>
            <person name="White O."/>
            <person name="Nelson K.E."/>
            <person name="Ketchum K.A."/>
            <person name="Dodson R.J."/>
            <person name="Gwinn M.L."/>
            <person name="Hickey E.K."/>
            <person name="Peterson J.D."/>
            <person name="Richardson D.L."/>
            <person name="Kerlavage A.R."/>
            <person name="Graham D.E."/>
            <person name="Kyrpides N.C."/>
            <person name="Fleischmann R.D."/>
            <person name="Quackenbush J."/>
            <person name="Lee N.H."/>
            <person name="Sutton G.G."/>
            <person name="Gill S.R."/>
            <person name="Kirkness E.F."/>
            <person name="Dougherty B.A."/>
            <person name="McKenney K."/>
            <person name="Adams M.D."/>
            <person name="Loftus B.J."/>
            <person name="Peterson S.N."/>
            <person name="Reich C.I."/>
            <person name="McNeil L.K."/>
            <person name="Badger J.H."/>
            <person name="Glodek A."/>
            <person name="Zhou L."/>
            <person name="Overbeek R."/>
            <person name="Gocayne J.D."/>
            <person name="Weidman J.F."/>
            <person name="McDonald L.A."/>
            <person name="Utterback T.R."/>
            <person name="Cotton M.D."/>
            <person name="Spriggs T."/>
            <person name="Artiach P."/>
            <person name="Kaine B.P."/>
            <person name="Sykes S.M."/>
            <person name="Sadow P.W."/>
            <person name="D'Andrea K.P."/>
            <person name="Bowman C."/>
            <person name="Fujii C."/>
            <person name="Garland S.A."/>
            <person name="Mason T.M."/>
            <person name="Olsen G.J."/>
            <person name="Fraser C.M."/>
            <person name="Smith H.O."/>
            <person name="Woese C.R."/>
            <person name="Venter J.C."/>
        </authorList>
    </citation>
    <scope>NUCLEOTIDE SEQUENCE [LARGE SCALE GENOMIC DNA]</scope>
    <source>
        <strain>ATCC 49558 / DSM 4304 / JCM 9628 / NBRC 100126 / VC-16</strain>
    </source>
</reference>
<reference key="2">
    <citation type="journal article" date="2005" name="Nucleic Acids Res.">
        <title>Toxin-antitoxin loci are highly abundant in free-living but lost from host-associated prokaryotes.</title>
        <authorList>
            <person name="Pandey D.P."/>
            <person name="Gerdes K."/>
        </authorList>
    </citation>
    <scope>POSSIBLE FUNCTION</scope>
    <source>
        <strain>ATCC 49558 / DSM 4304 / JCM 9628 / NBRC 100126 / VC-16</strain>
    </source>
</reference>
<name>VPB16_ARCFU</name>
<feature type="chain" id="PRO_0000157105" description="Putative antitoxin VapB16">
    <location>
        <begin position="1"/>
        <end position="73"/>
    </location>
</feature>
<dbReference type="EMBL" id="AE000782">
    <property type="protein sequence ID" value="AAB89570.1"/>
    <property type="molecule type" value="Genomic_DNA"/>
</dbReference>
<dbReference type="PIR" id="H69460">
    <property type="entry name" value="H69460"/>
</dbReference>
<dbReference type="RefSeq" id="WP_010879185.1">
    <property type="nucleotide sequence ID" value="NC_000917.1"/>
</dbReference>
<dbReference type="STRING" id="224325.AF_1689"/>
<dbReference type="PaxDb" id="224325-AF_1689"/>
<dbReference type="EnsemblBacteria" id="AAB89570">
    <property type="protein sequence ID" value="AAB89570"/>
    <property type="gene ID" value="AF_1689"/>
</dbReference>
<dbReference type="KEGG" id="afu:AF_1689"/>
<dbReference type="eggNOG" id="arCOG02681">
    <property type="taxonomic scope" value="Archaea"/>
</dbReference>
<dbReference type="HOGENOM" id="CLU_170073_1_1_2"/>
<dbReference type="OrthoDB" id="135634at2157"/>
<dbReference type="PhylomeDB" id="O28584"/>
<dbReference type="Proteomes" id="UP000002199">
    <property type="component" value="Chromosome"/>
</dbReference>
<dbReference type="HAMAP" id="MF_00794">
    <property type="entry name" value="UPF0330"/>
    <property type="match status" value="1"/>
</dbReference>
<dbReference type="InterPro" id="IPR003847">
    <property type="entry name" value="Put_antitoxin"/>
</dbReference>
<dbReference type="Pfam" id="PF02697">
    <property type="entry name" value="VAPB_antitox"/>
    <property type="match status" value="1"/>
</dbReference>
<sequence length="73" mass="8782">MKNIMVRDEVYEKLQKMKKGRESFSDVILRLIEGRKKRGIEILERYAGSLSDSELEKIVMEERRKFRVRSFDS</sequence>
<comment type="function">
    <text evidence="1">Possibly the antitoxin component of a type II toxin-antitoxin (TA) system. Its cognate toxin is VapC16 (Potential).</text>
</comment>
<comment type="similarity">
    <text evidence="1">Belongs to the UPF0330 family.</text>
</comment>
<accession>O28584</accession>